<dbReference type="EC" id="5.4.99.62" evidence="1"/>
<dbReference type="EMBL" id="CP000247">
    <property type="protein sequence ID" value="ABG71918.1"/>
    <property type="status" value="ALT_INIT"/>
    <property type="molecule type" value="Genomic_DNA"/>
</dbReference>
<dbReference type="RefSeq" id="WP_001314250.1">
    <property type="nucleotide sequence ID" value="NC_008253.1"/>
</dbReference>
<dbReference type="SMR" id="Q0TAW1"/>
<dbReference type="KEGG" id="ecp:ECP_3947"/>
<dbReference type="HOGENOM" id="CLU_135498_0_0_6"/>
<dbReference type="UniPathway" id="UPA00916">
    <property type="reaction ID" value="UER00888"/>
</dbReference>
<dbReference type="Proteomes" id="UP000009182">
    <property type="component" value="Chromosome"/>
</dbReference>
<dbReference type="GO" id="GO:0005829">
    <property type="term" value="C:cytosol"/>
    <property type="evidence" value="ECO:0007669"/>
    <property type="project" value="TreeGrafter"/>
</dbReference>
<dbReference type="GO" id="GO:0062193">
    <property type="term" value="F:D-ribose pyranase activity"/>
    <property type="evidence" value="ECO:0007669"/>
    <property type="project" value="UniProtKB-EC"/>
</dbReference>
<dbReference type="GO" id="GO:0016872">
    <property type="term" value="F:intramolecular lyase activity"/>
    <property type="evidence" value="ECO:0007669"/>
    <property type="project" value="UniProtKB-UniRule"/>
</dbReference>
<dbReference type="GO" id="GO:0048029">
    <property type="term" value="F:monosaccharide binding"/>
    <property type="evidence" value="ECO:0007669"/>
    <property type="project" value="InterPro"/>
</dbReference>
<dbReference type="GO" id="GO:0019303">
    <property type="term" value="P:D-ribose catabolic process"/>
    <property type="evidence" value="ECO:0007669"/>
    <property type="project" value="UniProtKB-UniRule"/>
</dbReference>
<dbReference type="FunFam" id="3.40.1650.10:FF:000002">
    <property type="entry name" value="D-ribose pyranase"/>
    <property type="match status" value="1"/>
</dbReference>
<dbReference type="Gene3D" id="3.40.1650.10">
    <property type="entry name" value="RbsD-like domain"/>
    <property type="match status" value="1"/>
</dbReference>
<dbReference type="HAMAP" id="MF_01661">
    <property type="entry name" value="D_rib_pyranase"/>
    <property type="match status" value="1"/>
</dbReference>
<dbReference type="InterPro" id="IPR023064">
    <property type="entry name" value="D-ribose_pyranase"/>
</dbReference>
<dbReference type="InterPro" id="IPR023750">
    <property type="entry name" value="RbsD-like_sf"/>
</dbReference>
<dbReference type="InterPro" id="IPR007721">
    <property type="entry name" value="RbsD_FucU"/>
</dbReference>
<dbReference type="NCBIfam" id="NF008761">
    <property type="entry name" value="PRK11797.1"/>
    <property type="match status" value="1"/>
</dbReference>
<dbReference type="PANTHER" id="PTHR37831">
    <property type="entry name" value="D-RIBOSE PYRANASE"/>
    <property type="match status" value="1"/>
</dbReference>
<dbReference type="PANTHER" id="PTHR37831:SF1">
    <property type="entry name" value="D-RIBOSE PYRANASE"/>
    <property type="match status" value="1"/>
</dbReference>
<dbReference type="Pfam" id="PF05025">
    <property type="entry name" value="RbsD_FucU"/>
    <property type="match status" value="1"/>
</dbReference>
<dbReference type="SUPFAM" id="SSF102546">
    <property type="entry name" value="RbsD-like"/>
    <property type="match status" value="1"/>
</dbReference>
<sequence length="139" mass="15281">MKKGTVLNSDISSVISRLGHTDTLVVCDAGLPIPKSATRIDMALTQGVPSFMQVLGVVTNEMQVEAVIIAEEIKQHNPQLHETLLTHLEQLQQHQGNTIEIRYTTHEQFKQQTAESQAVIRSGECSPYANIILCAGVTF</sequence>
<reference key="1">
    <citation type="journal article" date="2006" name="Mol. Microbiol.">
        <title>Role of pathogenicity island-associated integrases in the genome plasticity of uropathogenic Escherichia coli strain 536.</title>
        <authorList>
            <person name="Hochhut B."/>
            <person name="Wilde C."/>
            <person name="Balling G."/>
            <person name="Middendorf B."/>
            <person name="Dobrindt U."/>
            <person name="Brzuszkiewicz E."/>
            <person name="Gottschalk G."/>
            <person name="Carniel E."/>
            <person name="Hacker J."/>
        </authorList>
    </citation>
    <scope>NUCLEOTIDE SEQUENCE [LARGE SCALE GENOMIC DNA]</scope>
    <source>
        <strain>536 / UPEC</strain>
    </source>
</reference>
<evidence type="ECO:0000255" key="1">
    <source>
        <dbReference type="HAMAP-Rule" id="MF_01661"/>
    </source>
</evidence>
<evidence type="ECO:0000305" key="2"/>
<feature type="chain" id="PRO_0000346203" description="D-ribose pyranase">
    <location>
        <begin position="1"/>
        <end position="139"/>
    </location>
</feature>
<feature type="active site" description="Proton donor" evidence="1">
    <location>
        <position position="20"/>
    </location>
</feature>
<feature type="binding site" evidence="1">
    <location>
        <position position="28"/>
    </location>
    <ligand>
        <name>substrate</name>
    </ligand>
</feature>
<feature type="binding site" evidence="1">
    <location>
        <position position="106"/>
    </location>
    <ligand>
        <name>substrate</name>
    </ligand>
</feature>
<feature type="binding site" evidence="1">
    <location>
        <begin position="128"/>
        <end position="130"/>
    </location>
    <ligand>
        <name>substrate</name>
    </ligand>
</feature>
<proteinExistence type="inferred from homology"/>
<name>RBSD_ECOL5</name>
<keyword id="KW-0119">Carbohydrate metabolism</keyword>
<keyword id="KW-0963">Cytoplasm</keyword>
<keyword id="KW-0413">Isomerase</keyword>
<comment type="function">
    <text evidence="1">Catalyzes the interconversion of beta-pyran and beta-furan forms of D-ribose.</text>
</comment>
<comment type="catalytic activity">
    <reaction evidence="1">
        <text>beta-D-ribopyranose = beta-D-ribofuranose</text>
        <dbReference type="Rhea" id="RHEA:25432"/>
        <dbReference type="ChEBI" id="CHEBI:27476"/>
        <dbReference type="ChEBI" id="CHEBI:47002"/>
        <dbReference type="EC" id="5.4.99.62"/>
    </reaction>
</comment>
<comment type="pathway">
    <text evidence="1">Carbohydrate metabolism; D-ribose degradation; D-ribose 5-phosphate from beta-D-ribopyranose: step 1/2.</text>
</comment>
<comment type="subunit">
    <text evidence="1">Homodecamer.</text>
</comment>
<comment type="subcellular location">
    <subcellularLocation>
        <location evidence="1">Cytoplasm</location>
    </subcellularLocation>
</comment>
<comment type="similarity">
    <text evidence="1">Belongs to the RbsD / FucU family. RbsD subfamily.</text>
</comment>
<comment type="sequence caution" evidence="2">
    <conflict type="erroneous initiation">
        <sequence resource="EMBL-CDS" id="ABG71918"/>
    </conflict>
</comment>
<protein>
    <recommendedName>
        <fullName evidence="1">D-ribose pyranase</fullName>
        <ecNumber evidence="1">5.4.99.62</ecNumber>
    </recommendedName>
</protein>
<accession>Q0TAW1</accession>
<organism>
    <name type="scientific">Escherichia coli O6:K15:H31 (strain 536 / UPEC)</name>
    <dbReference type="NCBI Taxonomy" id="362663"/>
    <lineage>
        <taxon>Bacteria</taxon>
        <taxon>Pseudomonadati</taxon>
        <taxon>Pseudomonadota</taxon>
        <taxon>Gammaproteobacteria</taxon>
        <taxon>Enterobacterales</taxon>
        <taxon>Enterobacteriaceae</taxon>
        <taxon>Escherichia</taxon>
    </lineage>
</organism>
<gene>
    <name evidence="1" type="primary">rbsD</name>
    <name type="ordered locus">ECP_3947</name>
</gene>